<evidence type="ECO:0000250" key="1"/>
<evidence type="ECO:0000255" key="2"/>
<evidence type="ECO:0000269" key="3">
    <source>
    </source>
</evidence>
<evidence type="ECO:0000305" key="4"/>
<comment type="function">
    <text evidence="1 3">SbcCD cleaves DNA hairpin structures. These structures can inhibit DNA replication and are intermediates in certain DNA recombination reactions. The complex acts as a 3'-&gt;5' double strand exonuclease that can open hairpins. It also has a 5' single-strand endonuclease activity (By similarity). Is involved in the repression of type 5 capsule production by down-regulating cap5 genes via the arl-mgr pathway. Is probably part of the SOS regulon and involved in DNA recombination and repair.</text>
</comment>
<comment type="subunit">
    <text evidence="1">Heterodimer of SbcC and SbcD.</text>
</comment>
<comment type="developmental stage">
    <text evidence="3">Expressed very early in the exponential growth phase.</text>
</comment>
<comment type="induction">
    <text evidence="3">Induced by ciprofloxacin or mitomycin C in subinhibitory concentration.</text>
</comment>
<comment type="similarity">
    <text evidence="4">Belongs to the SMC family. SbcC subfamily.</text>
</comment>
<reference key="1">
    <citation type="journal article" date="2008" name="J. Bacteriol.">
        <title>Genome sequence of Staphylococcus aureus strain Newman and comparative analysis of staphylococcal genomes: polymorphism and evolution of two major pathogenicity islands.</title>
        <authorList>
            <person name="Baba T."/>
            <person name="Bae T."/>
            <person name="Schneewind O."/>
            <person name="Takeuchi F."/>
            <person name="Hiramatsu K."/>
        </authorList>
    </citation>
    <scope>NUCLEOTIDE SEQUENCE [LARGE SCALE GENOMIC DNA]</scope>
    <source>
        <strain>Newman</strain>
    </source>
</reference>
<reference key="2">
    <citation type="journal article" date="2007" name="J. Bacteriol.">
        <title>The sbcDC locus mediates repression of type 5 capsule production as part of the SOS response in Staphylococcus aureus.</title>
        <authorList>
            <person name="Chen Z."/>
            <person name="Luong T.T."/>
            <person name="Lee C.Y."/>
        </authorList>
    </citation>
    <scope>FUNCTION IN THE REPRESSION OF TYPE 5 CAPSULE PRODUCTION AND SOS RESPONSE</scope>
    <scope>DEVELOPMENTAL STAGE</scope>
    <scope>INDUCTION BY CIPROFLOXACIN AND MITOMYCIN C</scope>
</reference>
<organism>
    <name type="scientific">Staphylococcus aureus (strain Newman)</name>
    <dbReference type="NCBI Taxonomy" id="426430"/>
    <lineage>
        <taxon>Bacteria</taxon>
        <taxon>Bacillati</taxon>
        <taxon>Bacillota</taxon>
        <taxon>Bacilli</taxon>
        <taxon>Bacillales</taxon>
        <taxon>Staphylococcaceae</taxon>
        <taxon>Staphylococcus</taxon>
    </lineage>
</organism>
<keyword id="KW-0067">ATP-binding</keyword>
<keyword id="KW-0175">Coiled coil</keyword>
<keyword id="KW-0227">DNA damage</keyword>
<keyword id="KW-0233">DNA recombination</keyword>
<keyword id="KW-0234">DNA repair</keyword>
<keyword id="KW-0235">DNA replication</keyword>
<keyword id="KW-0255">Endonuclease</keyword>
<keyword id="KW-0269">Exonuclease</keyword>
<keyword id="KW-0378">Hydrolase</keyword>
<keyword id="KW-0540">Nuclease</keyword>
<keyword id="KW-0547">Nucleotide-binding</keyword>
<keyword id="KW-0742">SOS response</keyword>
<sequence>MKPLHLKLNNFGPFLKEEIDFSKIDNNELFLISGKTGSGKTMIFDAMTYALFGKASTEQREENDLRSHFADGKQPMSVTFEFQLNHRIYKVHRQGPYIKEGNTTKTNAKFDVFEMVDGKYEIRESKVISGTQFIIELLGVNADQFRQLFILPQGEFKRFLISNSREKQGILRTLFDSEKFEAIREILKEEVKKEKAQIENRYQQIDLLWQEIESFDDDNIKGLLEVATQQIDKLIENIPLLQARSKEILASVNESKETAIKEFEIIEKKTLENNILKDNINQLNKNKIDFVQLKEQQPEIEGIEAKLKLLQDITNLLNYIENREKIETKIANSKKDISKTNNKILNLDCDKRNIDKEKKMLEENGDLIESKISFIDKTRVLFNDINKYQQSYLNIERLRTEGEQLGDELNDLIKGLETVEDSIGNNQSDYEKIIELNNTITNINNEINIIKENEKAKAELDKLLGSKQELENQINEETSILKNLEIKLDRYDKTKLDLNDKESFISEIKSAVNIGDQCPICGNEIQDLGHHIDFDSIAKRQNEIKEIEANIHAIKSNIAVHNSEIKFVNEKISNINIKTQSDFSLEVLNKRLLENENALNNQRDLNKFIEQMKEEKDNLTLQIHNKQLRLNKNESELKLCRDLITEFETLSKYNNITNFEVDYKKYVQDVNQHQELSKEIEDKLMQLSQRKLIEQNNLNHYENQLETYNNDLELNEQSIEMEMSRLNLTDDNDIDEIIAWRGEQEELEQKRDTYKKRYHEFEMEIARLESLTKDKELLDSDKLKDEYELKKGKMNTLIDEYSAVHYQCQNNINKTQSIVSHINYLNQELKDQQEIFQLAEIVSGKNNKNLTLENFVLIYYLDQIIAQANLRLATMSDNRYQLIRREAVSHGLSGLEIDVFDLHSNKSRHISSLSGGETFQSSLALALGLSEIVQQQSGGISLESIFIDEGFGTLDQETLETALDTLLNLKSTGRMVGIISHVSELKNRIPLVLEVKSDQYQSSTRFKRN</sequence>
<feature type="chain" id="PRO_0000338471" description="Nuclease SbcCD subunit C">
    <location>
        <begin position="1"/>
        <end position="1009"/>
    </location>
</feature>
<feature type="coiled-coil region" evidence="2">
    <location>
        <begin position="176"/>
        <end position="364"/>
    </location>
</feature>
<feature type="coiled-coil region" evidence="2">
    <location>
        <begin position="392"/>
        <end position="502"/>
    </location>
</feature>
<feature type="coiled-coil region" evidence="2">
    <location>
        <begin position="535"/>
        <end position="802"/>
    </location>
</feature>
<feature type="binding site" evidence="2">
    <location>
        <begin position="34"/>
        <end position="41"/>
    </location>
    <ligand>
        <name>ATP</name>
        <dbReference type="ChEBI" id="CHEBI:30616"/>
    </ligand>
</feature>
<gene>
    <name type="primary">sbcC</name>
    <name type="ordered locus">NWMN_1258</name>
</gene>
<name>SBCC_STAAE</name>
<proteinExistence type="evidence at protein level"/>
<protein>
    <recommendedName>
        <fullName>Nuclease SbcCD subunit C</fullName>
    </recommendedName>
</protein>
<dbReference type="EMBL" id="AP009351">
    <property type="protein sequence ID" value="BAF67530.1"/>
    <property type="molecule type" value="Genomic_DNA"/>
</dbReference>
<dbReference type="RefSeq" id="WP_000803164.1">
    <property type="nucleotide sequence ID" value="NZ_JBBIAE010000001.1"/>
</dbReference>
<dbReference type="SMR" id="A6QGP8"/>
<dbReference type="KEGG" id="sae:NWMN_1258"/>
<dbReference type="HOGENOM" id="CLU_004785_2_1_9"/>
<dbReference type="Proteomes" id="UP000006386">
    <property type="component" value="Chromosome"/>
</dbReference>
<dbReference type="GO" id="GO:0005524">
    <property type="term" value="F:ATP binding"/>
    <property type="evidence" value="ECO:0007669"/>
    <property type="project" value="UniProtKB-KW"/>
</dbReference>
<dbReference type="GO" id="GO:0016887">
    <property type="term" value="F:ATP hydrolysis activity"/>
    <property type="evidence" value="ECO:0007669"/>
    <property type="project" value="InterPro"/>
</dbReference>
<dbReference type="GO" id="GO:0004519">
    <property type="term" value="F:endonuclease activity"/>
    <property type="evidence" value="ECO:0007669"/>
    <property type="project" value="UniProtKB-KW"/>
</dbReference>
<dbReference type="GO" id="GO:0004527">
    <property type="term" value="F:exonuclease activity"/>
    <property type="evidence" value="ECO:0007669"/>
    <property type="project" value="UniProtKB-KW"/>
</dbReference>
<dbReference type="GO" id="GO:0006310">
    <property type="term" value="P:DNA recombination"/>
    <property type="evidence" value="ECO:0007669"/>
    <property type="project" value="UniProtKB-KW"/>
</dbReference>
<dbReference type="GO" id="GO:0006260">
    <property type="term" value="P:DNA replication"/>
    <property type="evidence" value="ECO:0007669"/>
    <property type="project" value="UniProtKB-KW"/>
</dbReference>
<dbReference type="GO" id="GO:0006302">
    <property type="term" value="P:double-strand break repair"/>
    <property type="evidence" value="ECO:0007669"/>
    <property type="project" value="InterPro"/>
</dbReference>
<dbReference type="GO" id="GO:0009432">
    <property type="term" value="P:SOS response"/>
    <property type="evidence" value="ECO:0007669"/>
    <property type="project" value="UniProtKB-KW"/>
</dbReference>
<dbReference type="CDD" id="cd03279">
    <property type="entry name" value="ABC_sbcCD"/>
    <property type="match status" value="1"/>
</dbReference>
<dbReference type="Gene3D" id="1.10.287.510">
    <property type="entry name" value="Helix hairpin bin"/>
    <property type="match status" value="1"/>
</dbReference>
<dbReference type="Gene3D" id="3.40.50.300">
    <property type="entry name" value="P-loop containing nucleotide triphosphate hydrolases"/>
    <property type="match status" value="2"/>
</dbReference>
<dbReference type="InterPro" id="IPR027417">
    <property type="entry name" value="P-loop_NTPase"/>
</dbReference>
<dbReference type="InterPro" id="IPR038729">
    <property type="entry name" value="Rad50/SbcC_AAA"/>
</dbReference>
<dbReference type="InterPro" id="IPR053380">
    <property type="entry name" value="SbcCD_Nuclease_C"/>
</dbReference>
<dbReference type="NCBIfam" id="NF041751">
    <property type="entry name" value="sbcc_Staph"/>
    <property type="match status" value="1"/>
</dbReference>
<dbReference type="PANTHER" id="PTHR32114">
    <property type="entry name" value="ABC TRANSPORTER ABCH.3"/>
    <property type="match status" value="1"/>
</dbReference>
<dbReference type="PANTHER" id="PTHR32114:SF2">
    <property type="entry name" value="ABC TRANSPORTER ABCH.3"/>
    <property type="match status" value="1"/>
</dbReference>
<dbReference type="Pfam" id="PF13476">
    <property type="entry name" value="AAA_23"/>
    <property type="match status" value="1"/>
</dbReference>
<dbReference type="Pfam" id="PF13558">
    <property type="entry name" value="SbcC_Walker_B"/>
    <property type="match status" value="1"/>
</dbReference>
<dbReference type="SUPFAM" id="SSF52540">
    <property type="entry name" value="P-loop containing nucleoside triphosphate hydrolases"/>
    <property type="match status" value="1"/>
</dbReference>
<dbReference type="SUPFAM" id="SSF75712">
    <property type="entry name" value="Rad50 coiled-coil Zn hook"/>
    <property type="match status" value="1"/>
</dbReference>
<accession>A6QGP8</accession>